<evidence type="ECO:0000250" key="1"/>
<evidence type="ECO:0000250" key="2">
    <source>
        <dbReference type="UniProtKB" id="A0R2B1"/>
    </source>
</evidence>
<evidence type="ECO:0000255" key="3"/>
<evidence type="ECO:0000256" key="4">
    <source>
        <dbReference type="SAM" id="MobiDB-lite"/>
    </source>
</evidence>
<evidence type="ECO:0000305" key="5"/>
<dbReference type="EC" id="2.2.1.5"/>
<dbReference type="EC" id="4.1.1.71"/>
<dbReference type="EC" id="1.2.4.2"/>
<dbReference type="EC" id="2.3.1.61"/>
<dbReference type="EMBL" id="CP000611">
    <property type="protein sequence ID" value="ABQ72996.1"/>
    <property type="status" value="ALT_INIT"/>
    <property type="molecule type" value="Genomic_DNA"/>
</dbReference>
<dbReference type="RefSeq" id="WP_003898790.1">
    <property type="nucleotide sequence ID" value="NZ_CP016972.1"/>
</dbReference>
<dbReference type="SMR" id="A5U1U6"/>
<dbReference type="KEGG" id="mra:MRA_1256"/>
<dbReference type="eggNOG" id="COG0508">
    <property type="taxonomic scope" value="Bacteria"/>
</dbReference>
<dbReference type="eggNOG" id="COG0567">
    <property type="taxonomic scope" value="Bacteria"/>
</dbReference>
<dbReference type="HOGENOM" id="CLU_004709_1_0_11"/>
<dbReference type="UniPathway" id="UPA00223">
    <property type="reaction ID" value="UER00997"/>
</dbReference>
<dbReference type="UniPathway" id="UPA00223">
    <property type="reaction ID" value="UER01001"/>
</dbReference>
<dbReference type="Proteomes" id="UP000001988">
    <property type="component" value="Chromosome"/>
</dbReference>
<dbReference type="GO" id="GO:0005829">
    <property type="term" value="C:cytosol"/>
    <property type="evidence" value="ECO:0007669"/>
    <property type="project" value="TreeGrafter"/>
</dbReference>
<dbReference type="GO" id="GO:0045252">
    <property type="term" value="C:oxoglutarate dehydrogenase complex"/>
    <property type="evidence" value="ECO:0007669"/>
    <property type="project" value="TreeGrafter"/>
</dbReference>
<dbReference type="GO" id="GO:0050439">
    <property type="term" value="F:2-hydroxy-3-oxoadipate synthase activity"/>
    <property type="evidence" value="ECO:0007669"/>
    <property type="project" value="UniProtKB-EC"/>
</dbReference>
<dbReference type="GO" id="GO:0008683">
    <property type="term" value="F:2-oxoglutarate decarboxylase activity"/>
    <property type="evidence" value="ECO:0007669"/>
    <property type="project" value="UniProtKB-EC"/>
</dbReference>
<dbReference type="GO" id="GO:0004149">
    <property type="term" value="F:dihydrolipoyllysine-residue succinyltransferase activity"/>
    <property type="evidence" value="ECO:0007669"/>
    <property type="project" value="UniProtKB-EC"/>
</dbReference>
<dbReference type="GO" id="GO:0000287">
    <property type="term" value="F:magnesium ion binding"/>
    <property type="evidence" value="ECO:0007669"/>
    <property type="project" value="UniProtKB-ARBA"/>
</dbReference>
<dbReference type="GO" id="GO:0004591">
    <property type="term" value="F:oxoglutarate dehydrogenase (succinyl-transferring) activity"/>
    <property type="evidence" value="ECO:0007669"/>
    <property type="project" value="UniProtKB-EC"/>
</dbReference>
<dbReference type="GO" id="GO:0030976">
    <property type="term" value="F:thiamine pyrophosphate binding"/>
    <property type="evidence" value="ECO:0007669"/>
    <property type="project" value="InterPro"/>
</dbReference>
<dbReference type="GO" id="GO:0006099">
    <property type="term" value="P:tricarboxylic acid cycle"/>
    <property type="evidence" value="ECO:0007669"/>
    <property type="project" value="UniProtKB-UniPathway"/>
</dbReference>
<dbReference type="CDD" id="cd02016">
    <property type="entry name" value="TPP_E1_OGDC_like"/>
    <property type="match status" value="1"/>
</dbReference>
<dbReference type="FunFam" id="3.30.559.10:FF:000011">
    <property type="entry name" value="2-oxoglutarate dehydrogenase E1 component"/>
    <property type="match status" value="1"/>
</dbReference>
<dbReference type="FunFam" id="3.40.50.11610:FF:000002">
    <property type="entry name" value="2-oxoglutarate dehydrogenase E1 component"/>
    <property type="match status" value="1"/>
</dbReference>
<dbReference type="FunFam" id="3.40.50.970:FF:000018">
    <property type="entry name" value="2-oxoglutarate dehydrogenase E1 component"/>
    <property type="match status" value="1"/>
</dbReference>
<dbReference type="Gene3D" id="3.40.50.12470">
    <property type="match status" value="1"/>
</dbReference>
<dbReference type="Gene3D" id="3.40.50.970">
    <property type="match status" value="1"/>
</dbReference>
<dbReference type="Gene3D" id="3.30.559.10">
    <property type="entry name" value="Chloramphenicol acetyltransferase-like domain"/>
    <property type="match status" value="1"/>
</dbReference>
<dbReference type="Gene3D" id="3.40.50.11610">
    <property type="entry name" value="Multifunctional 2-oxoglutarate metabolism enzyme, C-terminal domain"/>
    <property type="match status" value="1"/>
</dbReference>
<dbReference type="Gene3D" id="1.10.287.1150">
    <property type="entry name" value="TPP helical domain"/>
    <property type="match status" value="1"/>
</dbReference>
<dbReference type="InterPro" id="IPR001078">
    <property type="entry name" value="2-oxoacid_DH_actylTfrase"/>
</dbReference>
<dbReference type="InterPro" id="IPR032106">
    <property type="entry name" value="2-oxogl_dehyd_N"/>
</dbReference>
<dbReference type="InterPro" id="IPR011603">
    <property type="entry name" value="2oxoglutarate_DH_E1"/>
</dbReference>
<dbReference type="InterPro" id="IPR023213">
    <property type="entry name" value="CAT-like_dom_sf"/>
</dbReference>
<dbReference type="InterPro" id="IPR001017">
    <property type="entry name" value="DH_E1"/>
</dbReference>
<dbReference type="InterPro" id="IPR042179">
    <property type="entry name" value="KGD_C_sf"/>
</dbReference>
<dbReference type="InterPro" id="IPR031717">
    <property type="entry name" value="ODO-1/KGD_C"/>
</dbReference>
<dbReference type="InterPro" id="IPR029061">
    <property type="entry name" value="THDP-binding"/>
</dbReference>
<dbReference type="InterPro" id="IPR005475">
    <property type="entry name" value="Transketolase-like_Pyr-bd"/>
</dbReference>
<dbReference type="NCBIfam" id="TIGR00239">
    <property type="entry name" value="2oxo_dh_E1"/>
    <property type="match status" value="1"/>
</dbReference>
<dbReference type="NCBIfam" id="NF006914">
    <property type="entry name" value="PRK09404.1"/>
    <property type="match status" value="1"/>
</dbReference>
<dbReference type="NCBIfam" id="NF008907">
    <property type="entry name" value="PRK12270.1"/>
    <property type="match status" value="1"/>
</dbReference>
<dbReference type="PANTHER" id="PTHR23152:SF4">
    <property type="entry name" value="2-OXOADIPATE DEHYDROGENASE COMPLEX COMPONENT E1"/>
    <property type="match status" value="1"/>
</dbReference>
<dbReference type="PANTHER" id="PTHR23152">
    <property type="entry name" value="2-OXOGLUTARATE DEHYDROGENASE"/>
    <property type="match status" value="1"/>
</dbReference>
<dbReference type="Pfam" id="PF00198">
    <property type="entry name" value="2-oxoacid_dh"/>
    <property type="match status" value="1"/>
</dbReference>
<dbReference type="Pfam" id="PF16078">
    <property type="entry name" value="2-oxogl_dehyd_N"/>
    <property type="match status" value="1"/>
</dbReference>
<dbReference type="Pfam" id="PF00676">
    <property type="entry name" value="E1_dh"/>
    <property type="match status" value="1"/>
</dbReference>
<dbReference type="Pfam" id="PF16870">
    <property type="entry name" value="OxoGdeHyase_C"/>
    <property type="match status" value="1"/>
</dbReference>
<dbReference type="Pfam" id="PF02779">
    <property type="entry name" value="Transket_pyr"/>
    <property type="match status" value="1"/>
</dbReference>
<dbReference type="PIRSF" id="PIRSF000157">
    <property type="entry name" value="Oxoglu_dh_E1"/>
    <property type="match status" value="1"/>
</dbReference>
<dbReference type="SMART" id="SM00861">
    <property type="entry name" value="Transket_pyr"/>
    <property type="match status" value="1"/>
</dbReference>
<dbReference type="SUPFAM" id="SSF52777">
    <property type="entry name" value="CoA-dependent acyltransferases"/>
    <property type="match status" value="1"/>
</dbReference>
<dbReference type="SUPFAM" id="SSF52518">
    <property type="entry name" value="Thiamin diphosphate-binding fold (THDP-binding)"/>
    <property type="match status" value="2"/>
</dbReference>
<organism>
    <name type="scientific">Mycobacterium tuberculosis (strain ATCC 25177 / H37Ra)</name>
    <dbReference type="NCBI Taxonomy" id="419947"/>
    <lineage>
        <taxon>Bacteria</taxon>
        <taxon>Bacillati</taxon>
        <taxon>Actinomycetota</taxon>
        <taxon>Actinomycetes</taxon>
        <taxon>Mycobacteriales</taxon>
        <taxon>Mycobacteriaceae</taxon>
        <taxon>Mycobacterium</taxon>
        <taxon>Mycobacterium tuberculosis complex</taxon>
    </lineage>
</organism>
<gene>
    <name type="primary">kgd</name>
    <name type="ordered locus">MRA_1256</name>
</gene>
<accession>A5U1U6</accession>
<sequence>MANISSPFGQNEWLVEEMYRKFRDDPSSVDPSWHEFLVDYSPEPTSQPAAEPTRVTSPLVAERAAAAAPQAPPKPADTAAAGNGVVAALAAKTAVPPPAEGDEVAVLRGAAAAVVKNMSASLEVPTATSVRAVPAKLLIDNRIVINNQLKRTRGGKISFTHLLGYALVQAVKKFPNMNRHYTEVDGKPTAVTPAHTNLGLAIDLQGKDGKRSLVVAGIKRCETMRFAQFVTAYEDIVRRARDGKLTTEDFAGVTISLTNPGTIGTVHSVPRLMPGQGAIIGVGAMEYPAEFQGASEERIAELGIGKLITLTSTYDHRIIQGAESGDFLRTIHELLLSDGFWDEVFRELSIPYLPVRWSTDNPDSIVDKNARVMNLIAAYRNRGHLMADTDPLRLDKARFRSHPDLEVLTHGLTLWDLDRVFKVDGFAGAQYKKLRDVLGLLRDAYCRHIGVEYAHILDPEQKEWLEQRVETKHVKPTVAQQKYILSKLNAAEAFETFLQTKYVGQKRFSLEGAESVIPMMDAAIDQCAEHGLDEVVIGMPHRGRLNVLANIVGKPYSQIFTEFEGNLNPSQAHGSGDVKYHLGATGLYLQMFGDNDIQVSLTANPSHLEAVDPVLEGLVRAKQDLLDHGSIDSDGQRAFSVVPLMLHGDAAFAGQGVVAETLNLANLPGYRVGGTIHIIVNNQIGFTTAPEYSRSSEYCTDVAKMIGAPIFHVNGDDPEACVWVARLAVDFRQRFKKDVVIDMLCYRRRGHNEGDDPSMTNPYVYDVVDTKRGARKSYTEALIGRGDISMKEAEDALRDYQGQLERVFNEVRELEKHGVQPSESVESDQMIPAGLATAVDKSLLARIGDAFLALPNGFTAHPRVQPVLEKRREMAYEGKIDWAFGELLALGSLVAEGKLVRLSGQDSRRGTFSQRHSVLIDRHTGEEFTPLQLLATNSDGSPTGGKFLVYDSPLSEYAAVGFEYGYTVGNPDAVVLWEAQFGDFVNGAQSIIDEFISSGEAKWGQLSNVVLLLPHGHEGQGPDHTSARIERFLQLWAEGSMTIAMPSTPSNYFHLLRRHALDGIQRPLIVFTPKSMLRHKAAVSEIKDFTEIKFRSVLEEPTYEDGIGDRNKVSRILLTSGKLYYELAARKAKDNRNDLAIVRLEQLAPLPRRRLRETLDRYENVKEFFWVQEEPANQGAWPRFGLELPELLPDKLAGIKRISRRAMSAPSSGSSKVHAVEQQEILDEAFG</sequence>
<reference key="1">
    <citation type="journal article" date="2008" name="PLoS ONE">
        <title>Genetic basis of virulence attenuation revealed by comparative genomic analysis of Mycobacterium tuberculosis strain H37Ra versus H37Rv.</title>
        <authorList>
            <person name="Zheng H."/>
            <person name="Lu L."/>
            <person name="Wang B."/>
            <person name="Pu S."/>
            <person name="Zhang X."/>
            <person name="Zhu G."/>
            <person name="Shi W."/>
            <person name="Zhang L."/>
            <person name="Wang H."/>
            <person name="Wang S."/>
            <person name="Zhao G."/>
            <person name="Zhang Y."/>
        </authorList>
    </citation>
    <scope>NUCLEOTIDE SEQUENCE [LARGE SCALE GENOMIC DNA]</scope>
    <source>
        <strain>ATCC 25177 / H37Ra</strain>
    </source>
</reference>
<comment type="function">
    <text evidence="1">Shows three enzymatic activities that share a first common step, the attack of thiamine-PP on 2-oxoglutarate (alpha-ketoglutarate, KG), leading to the formation of an enamine-thiamine-PP intermediate upon decarboxylation. Thus, displays KGD activity, catalyzing the decarboxylation from five-carbon 2-oxoglutarate to four-carbon succinate semialdehyde (SSA). Also catalyzes C-C bond formation between the activated aldehyde formed after decarboxylation of alpha-ketoglutarate and the carbonyl of glyoxylate (GLX), to yield 2-hydroxy-3-oxoadipate (HOA), which spontaneously decarboxylates to form 5-hydroxylevulinate (HLA). And is also a component of the 2-oxoglutarate dehydrogenase (ODH) complex, that catalyzes the overall conversion of 2-oxoglutarate to succinyl-CoA and CO(2). The KG decarboxylase and KG dehydrogenase reactions provide two alternative, tightly regulated, pathways connecting the oxidative and reductive branches of the TCA cycle (By similarity).</text>
</comment>
<comment type="catalytic activity">
    <reaction>
        <text>glyoxylate + 2-oxoglutarate + H(+) = 2-hydroxy-3-oxoadipate + CO2</text>
        <dbReference type="Rhea" id="RHEA:14341"/>
        <dbReference type="ChEBI" id="CHEBI:15378"/>
        <dbReference type="ChEBI" id="CHEBI:16526"/>
        <dbReference type="ChEBI" id="CHEBI:16810"/>
        <dbReference type="ChEBI" id="CHEBI:36655"/>
        <dbReference type="ChEBI" id="CHEBI:57712"/>
        <dbReference type="EC" id="2.2.1.5"/>
    </reaction>
</comment>
<comment type="catalytic activity">
    <reaction>
        <text>2-oxoglutarate + H(+) = succinate semialdehyde + CO2</text>
        <dbReference type="Rhea" id="RHEA:10524"/>
        <dbReference type="ChEBI" id="CHEBI:15378"/>
        <dbReference type="ChEBI" id="CHEBI:16526"/>
        <dbReference type="ChEBI" id="CHEBI:16810"/>
        <dbReference type="ChEBI" id="CHEBI:57706"/>
        <dbReference type="EC" id="4.1.1.71"/>
    </reaction>
</comment>
<comment type="catalytic activity">
    <reaction>
        <text>N(6)-[(R)-lipoyl]-L-lysyl-[protein] + 2-oxoglutarate + H(+) = N(6)-[(R)-S(8)-succinyldihydrolipoyl]-L-lysyl-[protein] + CO2</text>
        <dbReference type="Rhea" id="RHEA:12188"/>
        <dbReference type="Rhea" id="RHEA-COMP:10474"/>
        <dbReference type="Rhea" id="RHEA-COMP:20092"/>
        <dbReference type="ChEBI" id="CHEBI:15378"/>
        <dbReference type="ChEBI" id="CHEBI:16526"/>
        <dbReference type="ChEBI" id="CHEBI:16810"/>
        <dbReference type="ChEBI" id="CHEBI:83099"/>
        <dbReference type="ChEBI" id="CHEBI:83120"/>
        <dbReference type="EC" id="1.2.4.2"/>
    </reaction>
</comment>
<comment type="catalytic activity">
    <reaction>
        <text>N(6)-[(R)-dihydrolipoyl]-L-lysyl-[protein] + succinyl-CoA = N(6)-[(R)-S(8)-succinyldihydrolipoyl]-L-lysyl-[protein] + CoA</text>
        <dbReference type="Rhea" id="RHEA:15213"/>
        <dbReference type="Rhea" id="RHEA-COMP:10475"/>
        <dbReference type="Rhea" id="RHEA-COMP:20092"/>
        <dbReference type="ChEBI" id="CHEBI:57287"/>
        <dbReference type="ChEBI" id="CHEBI:57292"/>
        <dbReference type="ChEBI" id="CHEBI:83100"/>
        <dbReference type="ChEBI" id="CHEBI:83120"/>
        <dbReference type="EC" id="2.3.1.61"/>
    </reaction>
</comment>
<comment type="cofactor">
    <cofactor evidence="1">
        <name>Mg(2+)</name>
        <dbReference type="ChEBI" id="CHEBI:18420"/>
    </cofactor>
</comment>
<comment type="cofactor">
    <cofactor evidence="1">
        <name>thiamine diphosphate</name>
        <dbReference type="ChEBI" id="CHEBI:58937"/>
    </cofactor>
</comment>
<comment type="activity regulation">
    <text evidence="1">Alpha-ketoglutarate dehydrogenase and decarboxylase activities are inhibited by unphosphorylated GarA, and allosterically activated by acetyl-CoA, the main substrate of the TCA cycle.</text>
</comment>
<comment type="pathway">
    <text>Carbohydrate metabolism; tricarboxylic acid cycle; succinate from 2-oxoglutarate (transferase route): step 1/2.</text>
</comment>
<comment type="pathway">
    <text>Carbohydrate metabolism; tricarboxylic acid cycle; succinyl-CoA from 2-oxoglutarate (dehydrogenase route): step 1/1.</text>
</comment>
<comment type="subunit">
    <text evidence="1">Homodimer. The 2-oxoglutarate dehydrogenase (ODH) complex contains multiple copies of three enzymatic components: 2-oxoglutarate dehydrogenase (E1), dihydrolipoamide succinyltransferase (E2) and lipoamide dehydrogenase (E3) (By similarity).</text>
</comment>
<comment type="domain">
    <text evidence="1">Is a fusion protein with two major domains exhibiting structural features of an E1 and E2 protein, and a short sequence stretch of E1 localized at the N-terminus, which is connected by a linker region to the rest of the protein.</text>
</comment>
<comment type="similarity">
    <text evidence="5">Belongs to the 2-oxoacid dehydrogenase family. Kgd subfamily.</text>
</comment>
<comment type="sequence caution" evidence="5">
    <conflict type="erroneous initiation">
        <sequence resource="EMBL-CDS" id="ABQ72996"/>
    </conflict>
</comment>
<proteinExistence type="inferred from homology"/>
<keyword id="KW-0012">Acyltransferase</keyword>
<keyword id="KW-0021">Allosteric enzyme</keyword>
<keyword id="KW-0175">Coiled coil</keyword>
<keyword id="KW-0210">Decarboxylase</keyword>
<keyword id="KW-0456">Lyase</keyword>
<keyword id="KW-0460">Magnesium</keyword>
<keyword id="KW-0479">Metal-binding</keyword>
<keyword id="KW-0511">Multifunctional enzyme</keyword>
<keyword id="KW-0560">Oxidoreductase</keyword>
<keyword id="KW-1185">Reference proteome</keyword>
<keyword id="KW-0786">Thiamine pyrophosphate</keyword>
<keyword id="KW-0808">Transferase</keyword>
<keyword id="KW-0816">Tricarboxylic acid cycle</keyword>
<protein>
    <recommendedName>
        <fullName>Multifunctional 2-oxoglutarate metabolism enzyme</fullName>
    </recommendedName>
    <alternativeName>
        <fullName>2-hydroxy-3-oxoadipate synthase</fullName>
        <shortName>HOA synthase</shortName>
        <shortName>HOAS</shortName>
        <ecNumber>2.2.1.5</ecNumber>
    </alternativeName>
    <alternativeName>
        <fullName>2-oxoglutarate carboxy-lyase</fullName>
    </alternativeName>
    <alternativeName>
        <fullName>2-oxoglutarate decarboxylase</fullName>
    </alternativeName>
    <alternativeName>
        <fullName>Alpha-ketoglutarate decarboxylase</fullName>
        <shortName>KG decarboxylase</shortName>
        <shortName>KGD</shortName>
        <ecNumber>4.1.1.71</ecNumber>
    </alternativeName>
    <alternativeName>
        <fullName>Alpha-ketoglutarate-glyoxylate carboligase</fullName>
    </alternativeName>
    <domain>
        <recommendedName>
            <fullName>2-oxoglutarate dehydrogenase E1 component</fullName>
            <shortName>ODH E1 component</shortName>
            <ecNumber>1.2.4.2</ecNumber>
        </recommendedName>
        <alternativeName>
            <fullName>Alpha-ketoglutarate dehydrogenase E1 component</fullName>
            <shortName>KDH E1 component</shortName>
        </alternativeName>
    </domain>
    <domain>
        <recommendedName>
            <fullName>Dihydrolipoyllysine-residue succinyltransferase component of 2-oxoglutarate dehydrogenase complex</fullName>
            <ecNumber>2.3.1.61</ecNumber>
        </recommendedName>
        <alternativeName>
            <fullName>2-oxoglutarate dehydrogenase complex E2 component</fullName>
            <shortName>ODH E2 component</shortName>
            <shortName>OGDC-E2</shortName>
        </alternativeName>
        <alternativeName>
            <fullName>Dihydrolipoamide succinyltransferase</fullName>
        </alternativeName>
    </domain>
</protein>
<name>KGD_MYCTA</name>
<feature type="chain" id="PRO_0000310723" description="Multifunctional 2-oxoglutarate metabolism enzyme">
    <location>
        <begin position="1"/>
        <end position="1231"/>
    </location>
</feature>
<feature type="region of interest" description="2-oxoglutarate dehydrogenase E1, N-terminal part">
    <location>
        <begin position="1"/>
        <end position="41"/>
    </location>
</feature>
<feature type="region of interest" description="Disordered" evidence="4">
    <location>
        <begin position="38"/>
        <end position="79"/>
    </location>
</feature>
<feature type="region of interest" description="Linker">
    <location>
        <begin position="42"/>
        <end position="88"/>
    </location>
</feature>
<feature type="region of interest" description="Succinyltransferase E2">
    <location>
        <begin position="89"/>
        <end position="337"/>
    </location>
</feature>
<feature type="region of interest" description="2-oxoglutarate dehydrogenase E1, C-terminal part">
    <location>
        <begin position="338"/>
        <end position="1231"/>
    </location>
</feature>
<feature type="coiled-coil region" evidence="3">
    <location>
        <begin position="787"/>
        <end position="817"/>
    </location>
</feature>
<feature type="compositionally biased region" description="Low complexity" evidence="4">
    <location>
        <begin position="58"/>
        <end position="69"/>
    </location>
</feature>
<feature type="active site" description="Proton acceptor; for succinyltransferase activity" evidence="1">
    <location>
        <position position="316"/>
    </location>
</feature>
<feature type="binding site" evidence="2">
    <location>
        <position position="542"/>
    </location>
    <ligand>
        <name>thiamine diphosphate</name>
        <dbReference type="ChEBI" id="CHEBI:58937"/>
    </ligand>
</feature>
<feature type="binding site" evidence="2">
    <location>
        <position position="581"/>
    </location>
    <ligand>
        <name>2-oxoglutarate</name>
        <dbReference type="ChEBI" id="CHEBI:16810"/>
    </ligand>
</feature>
<feature type="binding site" evidence="2">
    <location>
        <position position="606"/>
    </location>
    <ligand>
        <name>2-oxoglutarate</name>
        <dbReference type="ChEBI" id="CHEBI:16810"/>
    </ligand>
</feature>
<feature type="binding site" evidence="2">
    <location>
        <position position="606"/>
    </location>
    <ligand>
        <name>thiamine diphosphate</name>
        <dbReference type="ChEBI" id="CHEBI:58937"/>
    </ligand>
</feature>
<feature type="binding site" evidence="2">
    <location>
        <position position="608"/>
    </location>
    <ligand>
        <name>thiamine diphosphate</name>
        <dbReference type="ChEBI" id="CHEBI:58937"/>
    </ligand>
</feature>
<feature type="binding site" evidence="2">
    <location>
        <position position="649"/>
    </location>
    <ligand>
        <name>Mg(2+)</name>
        <dbReference type="ChEBI" id="CHEBI:18420"/>
    </ligand>
</feature>
<feature type="binding site" evidence="2">
    <location>
        <position position="649"/>
    </location>
    <ligand>
        <name>thiamine diphosphate</name>
        <dbReference type="ChEBI" id="CHEBI:58937"/>
    </ligand>
</feature>
<feature type="binding site" evidence="2">
    <location>
        <position position="650"/>
    </location>
    <ligand>
        <name>thiamine diphosphate</name>
        <dbReference type="ChEBI" id="CHEBI:58937"/>
    </ligand>
</feature>
<feature type="binding site" evidence="2">
    <location>
        <position position="651"/>
    </location>
    <ligand>
        <name>thiamine diphosphate</name>
        <dbReference type="ChEBI" id="CHEBI:58937"/>
    </ligand>
</feature>
<feature type="binding site" evidence="2">
    <location>
        <position position="682"/>
    </location>
    <ligand>
        <name>Mg(2+)</name>
        <dbReference type="ChEBI" id="CHEBI:18420"/>
    </ligand>
</feature>
<feature type="binding site" evidence="2">
    <location>
        <position position="682"/>
    </location>
    <ligand>
        <name>thiamine diphosphate</name>
        <dbReference type="ChEBI" id="CHEBI:58937"/>
    </ligand>
</feature>
<feature type="binding site" evidence="2">
    <location>
        <position position="684"/>
    </location>
    <ligand>
        <name>Mg(2+)</name>
        <dbReference type="ChEBI" id="CHEBI:18420"/>
    </ligand>
</feature>
<feature type="binding site" evidence="2">
    <location>
        <position position="1024"/>
    </location>
    <ligand>
        <name>2-oxoglutarate</name>
        <dbReference type="ChEBI" id="CHEBI:16810"/>
    </ligand>
</feature>
<feature type="binding site" evidence="2">
    <location>
        <position position="1042"/>
    </location>
    <ligand>
        <name>acetyl-CoA</name>
        <dbReference type="ChEBI" id="CHEBI:57288"/>
        <note>allosteric activator</note>
    </ligand>
</feature>
<feature type="binding site" evidence="2">
    <location>
        <position position="1058"/>
    </location>
    <ligand>
        <name>acetyl-CoA</name>
        <dbReference type="ChEBI" id="CHEBI:57288"/>
        <note>allosteric activator</note>
    </ligand>
</feature>
<feature type="binding site" evidence="2">
    <location>
        <position position="1093"/>
    </location>
    <ligand>
        <name>acetyl-CoA</name>
        <dbReference type="ChEBI" id="CHEBI:57288"/>
        <note>allosteric activator</note>
    </ligand>
</feature>
<feature type="binding site" evidence="2">
    <location>
        <position position="1096"/>
    </location>
    <ligand>
        <name>acetyl-CoA</name>
        <dbReference type="ChEBI" id="CHEBI:57288"/>
        <note>allosteric activator</note>
    </ligand>
</feature>
<feature type="binding site" evidence="2">
    <location>
        <position position="1146"/>
    </location>
    <ligand>
        <name>acetyl-CoA</name>
        <dbReference type="ChEBI" id="CHEBI:57288"/>
        <note>allosteric activator</note>
    </ligand>
</feature>
<feature type="binding site" evidence="2">
    <location>
        <position position="1153"/>
    </location>
    <ligand>
        <name>acetyl-CoA</name>
        <dbReference type="ChEBI" id="CHEBI:57288"/>
        <note>allosteric activator</note>
    </ligand>
</feature>
<feature type="binding site" evidence="2">
    <location>
        <position position="1154"/>
    </location>
    <ligand>
        <name>acetyl-CoA</name>
        <dbReference type="ChEBI" id="CHEBI:57288"/>
        <note>allosteric activator</note>
    </ligand>
</feature>